<comment type="subcellular location">
    <subcellularLocation>
        <location evidence="2">Membrane</location>
        <topology evidence="2">Single-pass type I membrane protein</topology>
    </subcellularLocation>
</comment>
<evidence type="ECO:0000255" key="1"/>
<evidence type="ECO:0000305" key="2"/>
<accession>Q55B99</accession>
<reference key="1">
    <citation type="journal article" date="2002" name="Nature">
        <title>Sequence and analysis of chromosome 2 of Dictyostelium discoideum.</title>
        <authorList>
            <person name="Gloeckner G."/>
            <person name="Eichinger L."/>
            <person name="Szafranski K."/>
            <person name="Pachebat J.A."/>
            <person name="Bankier A.T."/>
            <person name="Dear P.H."/>
            <person name="Lehmann R."/>
            <person name="Baumgart C."/>
            <person name="Parra G."/>
            <person name="Abril J.F."/>
            <person name="Guigo R."/>
            <person name="Kumpf K."/>
            <person name="Tunggal B."/>
            <person name="Cox E.C."/>
            <person name="Quail M.A."/>
            <person name="Platzer M."/>
            <person name="Rosenthal A."/>
            <person name="Noegel A.A."/>
        </authorList>
    </citation>
    <scope>NUCLEOTIDE SEQUENCE [LARGE SCALE GENOMIC DNA]</scope>
    <source>
        <strain>AX4</strain>
    </source>
</reference>
<reference key="2">
    <citation type="journal article" date="2005" name="Nature">
        <title>The genome of the social amoeba Dictyostelium discoideum.</title>
        <authorList>
            <person name="Eichinger L."/>
            <person name="Pachebat J.A."/>
            <person name="Gloeckner G."/>
            <person name="Rajandream M.A."/>
            <person name="Sucgang R."/>
            <person name="Berriman M."/>
            <person name="Song J."/>
            <person name="Olsen R."/>
            <person name="Szafranski K."/>
            <person name="Xu Q."/>
            <person name="Tunggal B."/>
            <person name="Kummerfeld S."/>
            <person name="Madera M."/>
            <person name="Konfortov B.A."/>
            <person name="Rivero F."/>
            <person name="Bankier A.T."/>
            <person name="Lehmann R."/>
            <person name="Hamlin N."/>
            <person name="Davies R."/>
            <person name="Gaudet P."/>
            <person name="Fey P."/>
            <person name="Pilcher K."/>
            <person name="Chen G."/>
            <person name="Saunders D."/>
            <person name="Sodergren E.J."/>
            <person name="Davis P."/>
            <person name="Kerhornou A."/>
            <person name="Nie X."/>
            <person name="Hall N."/>
            <person name="Anjard C."/>
            <person name="Hemphill L."/>
            <person name="Bason N."/>
            <person name="Farbrother P."/>
            <person name="Desany B."/>
            <person name="Just E."/>
            <person name="Morio T."/>
            <person name="Rost R."/>
            <person name="Churcher C.M."/>
            <person name="Cooper J."/>
            <person name="Haydock S."/>
            <person name="van Driessche N."/>
            <person name="Cronin A."/>
            <person name="Goodhead I."/>
            <person name="Muzny D.M."/>
            <person name="Mourier T."/>
            <person name="Pain A."/>
            <person name="Lu M."/>
            <person name="Harper D."/>
            <person name="Lindsay R."/>
            <person name="Hauser H."/>
            <person name="James K.D."/>
            <person name="Quiles M."/>
            <person name="Madan Babu M."/>
            <person name="Saito T."/>
            <person name="Buchrieser C."/>
            <person name="Wardroper A."/>
            <person name="Felder M."/>
            <person name="Thangavelu M."/>
            <person name="Johnson D."/>
            <person name="Knights A."/>
            <person name="Loulseged H."/>
            <person name="Mungall K.L."/>
            <person name="Oliver K."/>
            <person name="Price C."/>
            <person name="Quail M.A."/>
            <person name="Urushihara H."/>
            <person name="Hernandez J."/>
            <person name="Rabbinowitsch E."/>
            <person name="Steffen D."/>
            <person name="Sanders M."/>
            <person name="Ma J."/>
            <person name="Kohara Y."/>
            <person name="Sharp S."/>
            <person name="Simmonds M.N."/>
            <person name="Spiegler S."/>
            <person name="Tivey A."/>
            <person name="Sugano S."/>
            <person name="White B."/>
            <person name="Walker D."/>
            <person name="Woodward J.R."/>
            <person name="Winckler T."/>
            <person name="Tanaka Y."/>
            <person name="Shaulsky G."/>
            <person name="Schleicher M."/>
            <person name="Weinstock G.M."/>
            <person name="Rosenthal A."/>
            <person name="Cox E.C."/>
            <person name="Chisholm R.L."/>
            <person name="Gibbs R.A."/>
            <person name="Loomis W.F."/>
            <person name="Platzer M."/>
            <person name="Kay R.R."/>
            <person name="Williams J.G."/>
            <person name="Dear P.H."/>
            <person name="Noegel A.A."/>
            <person name="Barrell B.G."/>
            <person name="Kuspa A."/>
        </authorList>
    </citation>
    <scope>NUCLEOTIDE SEQUENCE [LARGE SCALE GENOMIC DNA]</scope>
    <source>
        <strain>AX4</strain>
    </source>
</reference>
<name>Y1238_DICDI</name>
<proteinExistence type="inferred from homology"/>
<keyword id="KW-0325">Glycoprotein</keyword>
<keyword id="KW-0472">Membrane</keyword>
<keyword id="KW-1185">Reference proteome</keyword>
<keyword id="KW-0732">Signal</keyword>
<keyword id="KW-0812">Transmembrane</keyword>
<keyword id="KW-1133">Transmembrane helix</keyword>
<protein>
    <recommendedName>
        <fullName>Putative uncharacterized protein DDB_G0271238</fullName>
    </recommendedName>
</protein>
<gene>
    <name type="ORF">DDB_G0271238</name>
</gene>
<organism>
    <name type="scientific">Dictyostelium discoideum</name>
    <name type="common">Social amoeba</name>
    <dbReference type="NCBI Taxonomy" id="44689"/>
    <lineage>
        <taxon>Eukaryota</taxon>
        <taxon>Amoebozoa</taxon>
        <taxon>Evosea</taxon>
        <taxon>Eumycetozoa</taxon>
        <taxon>Dictyostelia</taxon>
        <taxon>Dictyosteliales</taxon>
        <taxon>Dictyosteliaceae</taxon>
        <taxon>Dictyostelium</taxon>
    </lineage>
</organism>
<sequence>MKIKFINYLLLFFIIFLNYNGFVKSDCYQELDLVLSNSCRNGPSKLVIHESIYSFESIELTPFVQPKLLNYYSWDLQDGINYFISYRYKNCSNIISKPFASKGMYYKLLAEPLCLNTYIPVRVYNWGAGGIEYNFYSVPSTIWVNSQNGLCSFQSPISPQSYTKGVLNDGALKFVGPTCGFKNGTITIDLTKGYSNYHLFLQSDYLFDNEIQPSSEGFYNGLESENYSLFVDSEQCATERIEIYMKDVFAPLEIDFENVPDLFHNSTISLSLSSGNNGILNNTNINAFVIQSERLLTDWNHVQTQITSNTYYGYAYNKDFSTEAGQTKCVYSETLLFDNYSPNFNFTISKSESCLENVSITFYPLPNQNIKVYDYSSESGIPFSMKDNVLSVENNLNLWIFDTNQNYGIVHSTVFDIPSYKIIETSNGIGCWKTYNITIVNYENYKNLRIHFYNENSEFNFYPVEGVFINVPALYYYVTYNAGDCETESYFVIDKLDRNTPMDNVVLEFNTLEIGNCTHETSFMVTVKSVFGSYSKTMQTFYDKEFTIFLPNCSCQINGIYVAPRLIDGDSLIYELLTDPNCNSTDTLIRFTSPSQDYSISSVYQNGVQLQYYNNLNGYYISSGENNITVNYEGDQYCYRTETITIQSVYEVPLVQITPVSDCRNPNGKIEISNFQIFYNLELVFNSNSKPINQGFIENLASGTYTINYYSNQTCINSITVYVPSSENVAEITTSVISNPTCDNGPFSDGMIRVALKYEGNQINNFTIQNQDAEFTYLNDGVYPIAGVGVNSLTISYLSCIWKRDITTVLNKPSFTLEKVFNDTCDLQSVYKLVSSNPNIEIDYIDSSNGFSYLNNYYLVFQNSGDFGYYVAWNSRCYEYYTQQIIMDNYDRDSNVKYIDYEIVKPDNCNSLKIDLIITNMNKFISLTIENKLPTPINSTHSIFKNLPPSKSYDILYTLLNGCVAYQTVGIDEFKSGFTKETIDIIKTSDICYSGKASIQLSNLDFDNYYYYIKNSNSLMGVTDSYDSIQPQQSGNINGTILLSNYNPGSYKIYRGCKSMANCYLETNVVIESEDPIIESISVTDSYDKLNNGTVEIKLNYNSPYPINFKIIGTQLSNQNGKFGNLTPKTYEVQVTLTDRMCPVTLSKSFTINLKTSPPTPSPQDPSDELSTSSFVQVNLLFLSILIFTIFIF</sequence>
<feature type="signal peptide" evidence="1">
    <location>
        <begin position="1"/>
        <end position="25"/>
    </location>
</feature>
<feature type="chain" id="PRO_0000393117" description="Putative uncharacterized protein DDB_G0271238">
    <location>
        <begin position="26"/>
        <end position="1193"/>
    </location>
</feature>
<feature type="topological domain" description="Extracellular" evidence="1">
    <location>
        <begin position="26"/>
        <end position="1172"/>
    </location>
</feature>
<feature type="transmembrane region" description="Helical" evidence="1">
    <location>
        <begin position="1173"/>
        <end position="1193"/>
    </location>
</feature>
<feature type="glycosylation site" description="N-linked (GlcNAc...) asparagine" evidence="1">
    <location>
        <position position="90"/>
    </location>
</feature>
<feature type="glycosylation site" description="N-linked (GlcNAc...) asparagine" evidence="1">
    <location>
        <position position="183"/>
    </location>
</feature>
<feature type="glycosylation site" description="N-linked (GlcNAc...) asparagine" evidence="1">
    <location>
        <position position="226"/>
    </location>
</feature>
<feature type="glycosylation site" description="N-linked (GlcNAc...) asparagine" evidence="1">
    <location>
        <position position="265"/>
    </location>
</feature>
<feature type="glycosylation site" description="N-linked (GlcNAc...) asparagine" evidence="1">
    <location>
        <position position="281"/>
    </location>
</feature>
<feature type="glycosylation site" description="N-linked (GlcNAc...) asparagine" evidence="1">
    <location>
        <position position="345"/>
    </location>
</feature>
<feature type="glycosylation site" description="N-linked (GlcNAc...) asparagine" evidence="1">
    <location>
        <position position="357"/>
    </location>
</feature>
<feature type="glycosylation site" description="N-linked (GlcNAc...) asparagine" evidence="1">
    <location>
        <position position="436"/>
    </location>
</feature>
<feature type="glycosylation site" description="N-linked (GlcNAc...) asparagine" evidence="1">
    <location>
        <position position="516"/>
    </location>
</feature>
<feature type="glycosylation site" description="N-linked (GlcNAc...) asparagine" evidence="1">
    <location>
        <position position="552"/>
    </location>
</feature>
<feature type="glycosylation site" description="N-linked (GlcNAc...) asparagine" evidence="1">
    <location>
        <position position="583"/>
    </location>
</feature>
<feature type="glycosylation site" description="N-linked (GlcNAc...) asparagine" evidence="1">
    <location>
        <position position="627"/>
    </location>
</feature>
<feature type="glycosylation site" description="N-linked (GlcNAc...) asparagine" evidence="1">
    <location>
        <position position="712"/>
    </location>
</feature>
<feature type="glycosylation site" description="N-linked (GlcNAc...) asparagine" evidence="1">
    <location>
        <position position="765"/>
    </location>
</feature>
<feature type="glycosylation site" description="N-linked (GlcNAc...) asparagine" evidence="1">
    <location>
        <position position="822"/>
    </location>
</feature>
<feature type="glycosylation site" description="N-linked (GlcNAc...) asparagine" evidence="1">
    <location>
        <position position="938"/>
    </location>
</feature>
<feature type="glycosylation site" description="N-linked (GlcNAc...) asparagine" evidence="1">
    <location>
        <position position="1038"/>
    </location>
</feature>
<feature type="glycosylation site" description="N-linked (GlcNAc...) asparagine" evidence="1">
    <location>
        <position position="1092"/>
    </location>
</feature>
<dbReference type="EMBL" id="AAFI02000006">
    <property type="protein sequence ID" value="EAL71749.1"/>
    <property type="molecule type" value="Genomic_DNA"/>
</dbReference>
<dbReference type="RefSeq" id="XP_645713.1">
    <property type="nucleotide sequence ID" value="XM_640621.1"/>
</dbReference>
<dbReference type="FunCoup" id="Q55B99">
    <property type="interactions" value="99"/>
</dbReference>
<dbReference type="GlyGen" id="Q55B99">
    <property type="glycosylation" value="20 sites"/>
</dbReference>
<dbReference type="PaxDb" id="44689-DDB0232137"/>
<dbReference type="EnsemblProtists" id="EAL71749">
    <property type="protein sequence ID" value="EAL71749"/>
    <property type="gene ID" value="DDB_G0271238"/>
</dbReference>
<dbReference type="GeneID" id="8617906"/>
<dbReference type="KEGG" id="ddi:DDB_G0271238"/>
<dbReference type="dictyBase" id="DDB_G0271238"/>
<dbReference type="VEuPathDB" id="AmoebaDB:DDB_G0271238"/>
<dbReference type="HOGENOM" id="CLU_271632_0_0_1"/>
<dbReference type="InParanoid" id="Q55B99"/>
<dbReference type="OMA" id="QCATERI"/>
<dbReference type="PhylomeDB" id="Q55B99"/>
<dbReference type="PRO" id="PR:Q55B99"/>
<dbReference type="Proteomes" id="UP000002195">
    <property type="component" value="Chromosome 2"/>
</dbReference>
<dbReference type="GO" id="GO:0016020">
    <property type="term" value="C:membrane"/>
    <property type="evidence" value="ECO:0007669"/>
    <property type="project" value="UniProtKB-SubCell"/>
</dbReference>